<organism>
    <name type="scientific">Streptomyces avermitilis (strain ATCC 31267 / DSM 46492 / JCM 5070 / NBRC 14893 / NCIMB 12804 / NRRL 8165 / MA-4680)</name>
    <dbReference type="NCBI Taxonomy" id="227882"/>
    <lineage>
        <taxon>Bacteria</taxon>
        <taxon>Bacillati</taxon>
        <taxon>Actinomycetota</taxon>
        <taxon>Actinomycetes</taxon>
        <taxon>Kitasatosporales</taxon>
        <taxon>Streptomycetaceae</taxon>
        <taxon>Streptomyces</taxon>
    </lineage>
</organism>
<name>ECTB_STRAW</name>
<protein>
    <recommendedName>
        <fullName>Diaminobutyrate--2-oxoglutarate transaminase</fullName>
        <ecNumber>2.6.1.76</ecNumber>
    </recommendedName>
    <alternativeName>
        <fullName>DABA aminotransferase</fullName>
    </alternativeName>
    <alternativeName>
        <fullName>Diaminobutyrate--2-oxoglutarate aminotransferase</fullName>
    </alternativeName>
    <alternativeName>
        <fullName>L-2,4-diaminobutyric acid transaminase</fullName>
    </alternativeName>
</protein>
<reference key="1">
    <citation type="journal article" date="2001" name="Proc. Natl. Acad. Sci. U.S.A.">
        <title>Genome sequence of an industrial microorganism Streptomyces avermitilis: deducing the ability of producing secondary metabolites.</title>
        <authorList>
            <person name="Omura S."/>
            <person name="Ikeda H."/>
            <person name="Ishikawa J."/>
            <person name="Hanamoto A."/>
            <person name="Takahashi C."/>
            <person name="Shinose M."/>
            <person name="Takahashi Y."/>
            <person name="Horikawa H."/>
            <person name="Nakazawa H."/>
            <person name="Osonoe T."/>
            <person name="Kikuchi H."/>
            <person name="Shiba T."/>
            <person name="Sakaki Y."/>
            <person name="Hattori M."/>
        </authorList>
    </citation>
    <scope>NUCLEOTIDE SEQUENCE [LARGE SCALE GENOMIC DNA]</scope>
    <source>
        <strain>ATCC 31267 / DSM 46492 / JCM 5070 / NBRC 14893 / NCIMB 12804 / NRRL 8165 / MA-4680</strain>
    </source>
</reference>
<reference key="2">
    <citation type="journal article" date="2003" name="Nat. Biotechnol.">
        <title>Complete genome sequence and comparative analysis of the industrial microorganism Streptomyces avermitilis.</title>
        <authorList>
            <person name="Ikeda H."/>
            <person name="Ishikawa J."/>
            <person name="Hanamoto A."/>
            <person name="Shinose M."/>
            <person name="Kikuchi H."/>
            <person name="Shiba T."/>
            <person name="Sakaki Y."/>
            <person name="Hattori M."/>
            <person name="Omura S."/>
        </authorList>
    </citation>
    <scope>NUCLEOTIDE SEQUENCE [LARGE SCALE GENOMIC DNA]</scope>
    <source>
        <strain>ATCC 31267 / DSM 46492 / JCM 5070 / NBRC 14893 / NCIMB 12804 / NRRL 8165 / MA-4680</strain>
    </source>
</reference>
<keyword id="KW-0032">Aminotransferase</keyword>
<keyword id="KW-0663">Pyridoxal phosphate</keyword>
<keyword id="KW-1185">Reference proteome</keyword>
<keyword id="KW-0808">Transferase</keyword>
<proteinExistence type="inferred from homology"/>
<comment type="function">
    <text evidence="1">Catalyzes reversively the conversion of L-aspartate beta-semialdehyde (ASA) to L-2,4-diaminobutyrate (DABA) by transamination with L-glutamate.</text>
</comment>
<comment type="catalytic activity">
    <reaction>
        <text>L-2,4-diaminobutanoate + 2-oxoglutarate = L-aspartate 4-semialdehyde + L-glutamate</text>
        <dbReference type="Rhea" id="RHEA:11160"/>
        <dbReference type="ChEBI" id="CHEBI:16810"/>
        <dbReference type="ChEBI" id="CHEBI:29985"/>
        <dbReference type="ChEBI" id="CHEBI:58761"/>
        <dbReference type="ChEBI" id="CHEBI:537519"/>
        <dbReference type="EC" id="2.6.1.76"/>
    </reaction>
</comment>
<comment type="cofactor">
    <cofactor evidence="1">
        <name>pyridoxal 5'-phosphate</name>
        <dbReference type="ChEBI" id="CHEBI:597326"/>
    </cofactor>
</comment>
<comment type="pathway">
    <text>Amine and polyamine biosynthesis; ectoine biosynthesis; L-ectoine from L-aspartate 4-semialdehyde: step 1/3.</text>
</comment>
<comment type="similarity">
    <text evidence="3">Belongs to the class-III pyridoxal-phosphate-dependent aminotransferase family.</text>
</comment>
<gene>
    <name type="primary">ectB</name>
    <name type="ordered locus">SAV_6397</name>
</gene>
<feature type="chain" id="PRO_0000120527" description="Diaminobutyrate--2-oxoglutarate transaminase">
    <location>
        <begin position="1"/>
        <end position="423"/>
    </location>
</feature>
<feature type="modified residue" description="N6-(pyridoxal phosphate)lysine" evidence="2">
    <location>
        <position position="271"/>
    </location>
</feature>
<evidence type="ECO:0000250" key="1"/>
<evidence type="ECO:0000255" key="2"/>
<evidence type="ECO:0000305" key="3"/>
<sequence>MTITQPDLSVFETVESEVRSYCRGWPTVFDRAQGSRMYDEDGHAYLDFFAGAGSLNYGHNNPVLKRALIDYLERDGVTHGLDMSTAAKRAFLESFQNLILRPRDLPYKVMFPGPTGTNAVESALKLARKVKGREAIVSFTNAFHGMSLGSLAVTGNAFKRAGAGIPLVHGTPMPFDNYFDGKVPDFLWFERLLEDQGSGLNKPAAVIVETVQGEGGINVARPEWLRALAELCKRQDMLLIVDDIQMGCGRTGAFFSFEEAGVTPDIVTVSKSISGYGLPMSLCLFKPELDIWEPGEHNGTFRGNNPAFVTAAAALQTYWADGSAMEKQTLARGEQVEQALISITEENLADVKEYRGRGLVWGIEFKDKDRAGRIAQRAFELGLLIETSGPESEVVKLLPALTITPEELDEGLRTLARAVRETA</sequence>
<accession>Q829L4</accession>
<dbReference type="EC" id="2.6.1.76"/>
<dbReference type="EMBL" id="BA000030">
    <property type="protein sequence ID" value="BAC74108.1"/>
    <property type="molecule type" value="Genomic_DNA"/>
</dbReference>
<dbReference type="RefSeq" id="WP_010987797.1">
    <property type="nucleotide sequence ID" value="NZ_JZJK01000089.1"/>
</dbReference>
<dbReference type="SMR" id="Q829L4"/>
<dbReference type="GeneID" id="41543471"/>
<dbReference type="KEGG" id="sma:SAVERM_6397"/>
<dbReference type="eggNOG" id="COG0160">
    <property type="taxonomic scope" value="Bacteria"/>
</dbReference>
<dbReference type="HOGENOM" id="CLU_016922_10_0_11"/>
<dbReference type="OrthoDB" id="9801052at2"/>
<dbReference type="UniPathway" id="UPA00067">
    <property type="reaction ID" value="UER00121"/>
</dbReference>
<dbReference type="Proteomes" id="UP000000428">
    <property type="component" value="Chromosome"/>
</dbReference>
<dbReference type="GO" id="GO:0045303">
    <property type="term" value="F:diaminobutyrate-2-oxoglutarate transaminase activity"/>
    <property type="evidence" value="ECO:0007669"/>
    <property type="project" value="UniProtKB-EC"/>
</dbReference>
<dbReference type="GO" id="GO:0047307">
    <property type="term" value="F:diaminobutyrate-pyruvate transaminase activity"/>
    <property type="evidence" value="ECO:0007669"/>
    <property type="project" value="InterPro"/>
</dbReference>
<dbReference type="GO" id="GO:0030170">
    <property type="term" value="F:pyridoxal phosphate binding"/>
    <property type="evidence" value="ECO:0007669"/>
    <property type="project" value="InterPro"/>
</dbReference>
<dbReference type="GO" id="GO:0019491">
    <property type="term" value="P:ectoine biosynthetic process"/>
    <property type="evidence" value="ECO:0007669"/>
    <property type="project" value="UniProtKB-UniPathway"/>
</dbReference>
<dbReference type="CDD" id="cd00610">
    <property type="entry name" value="OAT_like"/>
    <property type="match status" value="1"/>
</dbReference>
<dbReference type="Gene3D" id="3.90.1150.10">
    <property type="entry name" value="Aspartate Aminotransferase, domain 1"/>
    <property type="match status" value="1"/>
</dbReference>
<dbReference type="Gene3D" id="3.40.640.10">
    <property type="entry name" value="Type I PLP-dependent aspartate aminotransferase-like (Major domain)"/>
    <property type="match status" value="1"/>
</dbReference>
<dbReference type="InterPro" id="IPR005814">
    <property type="entry name" value="Aminotrans_3"/>
</dbReference>
<dbReference type="InterPro" id="IPR049704">
    <property type="entry name" value="Aminotrans_3_PPA_site"/>
</dbReference>
<dbReference type="InterPro" id="IPR004637">
    <property type="entry name" value="Dat"/>
</dbReference>
<dbReference type="InterPro" id="IPR012773">
    <property type="entry name" value="Ectoine_EctB"/>
</dbReference>
<dbReference type="InterPro" id="IPR015424">
    <property type="entry name" value="PyrdxlP-dep_Trfase"/>
</dbReference>
<dbReference type="InterPro" id="IPR015421">
    <property type="entry name" value="PyrdxlP-dep_Trfase_major"/>
</dbReference>
<dbReference type="InterPro" id="IPR015422">
    <property type="entry name" value="PyrdxlP-dep_Trfase_small"/>
</dbReference>
<dbReference type="NCBIfam" id="TIGR00709">
    <property type="entry name" value="dat"/>
    <property type="match status" value="1"/>
</dbReference>
<dbReference type="NCBIfam" id="TIGR02407">
    <property type="entry name" value="ectoine_ectB"/>
    <property type="match status" value="1"/>
</dbReference>
<dbReference type="NCBIfam" id="NF006733">
    <property type="entry name" value="PRK09264.1"/>
    <property type="match status" value="1"/>
</dbReference>
<dbReference type="PANTHER" id="PTHR43552">
    <property type="entry name" value="DIAMINOBUTYRATE--2-OXOGLUTARATE AMINOTRANSFERASE"/>
    <property type="match status" value="1"/>
</dbReference>
<dbReference type="PANTHER" id="PTHR43552:SF2">
    <property type="entry name" value="DIAMINOBUTYRATE--2-OXOGLUTARATE TRANSAMINASE"/>
    <property type="match status" value="1"/>
</dbReference>
<dbReference type="Pfam" id="PF00202">
    <property type="entry name" value="Aminotran_3"/>
    <property type="match status" value="1"/>
</dbReference>
<dbReference type="PIRSF" id="PIRSF000521">
    <property type="entry name" value="Transaminase_4ab_Lys_Orn"/>
    <property type="match status" value="1"/>
</dbReference>
<dbReference type="SUPFAM" id="SSF53383">
    <property type="entry name" value="PLP-dependent transferases"/>
    <property type="match status" value="1"/>
</dbReference>
<dbReference type="PROSITE" id="PS00600">
    <property type="entry name" value="AA_TRANSFER_CLASS_3"/>
    <property type="match status" value="1"/>
</dbReference>